<evidence type="ECO:0000250" key="1"/>
<evidence type="ECO:0000255" key="2"/>
<evidence type="ECO:0000305" key="3"/>
<gene>
    <name type="primary">gltB</name>
    <name type="ordered locus">BSU18440</name>
</gene>
<proteinExistence type="evidence at protein level"/>
<keyword id="KW-0002">3D-structure</keyword>
<keyword id="KW-0028">Amino-acid biosynthesis</keyword>
<keyword id="KW-0314">Glutamate biosynthesis</keyword>
<keyword id="KW-0521">NADP</keyword>
<keyword id="KW-0560">Oxidoreductase</keyword>
<keyword id="KW-1185">Reference proteome</keyword>
<dbReference type="EC" id="1.4.1.13"/>
<dbReference type="EMBL" id="AL009126">
    <property type="protein sequence ID" value="CAB13727.2"/>
    <property type="molecule type" value="Genomic_DNA"/>
</dbReference>
<dbReference type="PIR" id="H69634">
    <property type="entry name" value="H69634"/>
</dbReference>
<dbReference type="RefSeq" id="NP_389726.2">
    <property type="nucleotide sequence ID" value="NC_000964.3"/>
</dbReference>
<dbReference type="PDB" id="7MFT">
    <property type="method" value="EM"/>
    <property type="resolution" value="3.90 A"/>
    <property type="chains" value="I=1-493"/>
</dbReference>
<dbReference type="PDBsum" id="7MFT"/>
<dbReference type="SMR" id="O34399"/>
<dbReference type="FunCoup" id="O34399">
    <property type="interactions" value="420"/>
</dbReference>
<dbReference type="IntAct" id="O34399">
    <property type="interactions" value="1"/>
</dbReference>
<dbReference type="MINT" id="O34399"/>
<dbReference type="STRING" id="224308.BSU18440"/>
<dbReference type="PaxDb" id="224308-BSU18440"/>
<dbReference type="EnsemblBacteria" id="CAB13727">
    <property type="protein sequence ID" value="CAB13727"/>
    <property type="gene ID" value="BSU_18440"/>
</dbReference>
<dbReference type="GeneID" id="940053"/>
<dbReference type="KEGG" id="bsu:BSU18440"/>
<dbReference type="PATRIC" id="fig|224308.179.peg.2011"/>
<dbReference type="eggNOG" id="COG0493">
    <property type="taxonomic scope" value="Bacteria"/>
</dbReference>
<dbReference type="InParanoid" id="O34399"/>
<dbReference type="OrthoDB" id="9803192at2"/>
<dbReference type="PhylomeDB" id="O34399"/>
<dbReference type="BioCyc" id="BSUB:BSU18440-MONOMER"/>
<dbReference type="SABIO-RK" id="O34399"/>
<dbReference type="UniPathway" id="UPA00045"/>
<dbReference type="UniPathway" id="UPA00634">
    <property type="reaction ID" value="UER00689"/>
</dbReference>
<dbReference type="PRO" id="PR:O34399"/>
<dbReference type="Proteomes" id="UP000001570">
    <property type="component" value="Chromosome"/>
</dbReference>
<dbReference type="GO" id="GO:0004355">
    <property type="term" value="F:glutamate synthase (NADPH) activity"/>
    <property type="evidence" value="ECO:0007669"/>
    <property type="project" value="UniProtKB-EC"/>
</dbReference>
<dbReference type="GO" id="GO:0051536">
    <property type="term" value="F:iron-sulfur cluster binding"/>
    <property type="evidence" value="ECO:0007669"/>
    <property type="project" value="InterPro"/>
</dbReference>
<dbReference type="GO" id="GO:0016639">
    <property type="term" value="F:oxidoreductase activity, acting on the CH-NH2 group of donors, NAD or NADP as acceptor"/>
    <property type="evidence" value="ECO:0007669"/>
    <property type="project" value="InterPro"/>
</dbReference>
<dbReference type="GO" id="GO:0097054">
    <property type="term" value="P:L-glutamate biosynthetic process"/>
    <property type="evidence" value="ECO:0007669"/>
    <property type="project" value="UniProtKB-UniPathway"/>
</dbReference>
<dbReference type="Gene3D" id="1.10.1060.10">
    <property type="entry name" value="Alpha-helical ferredoxin"/>
    <property type="match status" value="1"/>
</dbReference>
<dbReference type="Gene3D" id="3.50.50.60">
    <property type="entry name" value="FAD/NAD(P)-binding domain"/>
    <property type="match status" value="2"/>
</dbReference>
<dbReference type="InterPro" id="IPR028261">
    <property type="entry name" value="DPD_II"/>
</dbReference>
<dbReference type="InterPro" id="IPR036188">
    <property type="entry name" value="FAD/NAD-bd_sf"/>
</dbReference>
<dbReference type="InterPro" id="IPR023753">
    <property type="entry name" value="FAD/NAD-binding_dom"/>
</dbReference>
<dbReference type="InterPro" id="IPR006005">
    <property type="entry name" value="Glut_synth_ssu1"/>
</dbReference>
<dbReference type="InterPro" id="IPR051394">
    <property type="entry name" value="Glutamate_Synthase"/>
</dbReference>
<dbReference type="InterPro" id="IPR009051">
    <property type="entry name" value="Helical_ferredxn"/>
</dbReference>
<dbReference type="NCBIfam" id="TIGR01317">
    <property type="entry name" value="GOGAT_sm_gam"/>
    <property type="match status" value="1"/>
</dbReference>
<dbReference type="PANTHER" id="PTHR43100">
    <property type="entry name" value="GLUTAMATE SYNTHASE [NADPH] SMALL CHAIN"/>
    <property type="match status" value="1"/>
</dbReference>
<dbReference type="PANTHER" id="PTHR43100:SF1">
    <property type="entry name" value="GLUTAMATE SYNTHASE [NADPH] SMALL CHAIN"/>
    <property type="match status" value="1"/>
</dbReference>
<dbReference type="Pfam" id="PF14691">
    <property type="entry name" value="Fer4_20"/>
    <property type="match status" value="1"/>
</dbReference>
<dbReference type="Pfam" id="PF07992">
    <property type="entry name" value="Pyr_redox_2"/>
    <property type="match status" value="1"/>
</dbReference>
<dbReference type="PRINTS" id="PR00419">
    <property type="entry name" value="ADXRDTASE"/>
</dbReference>
<dbReference type="SUPFAM" id="SSF46548">
    <property type="entry name" value="alpha-helical ferredoxin"/>
    <property type="match status" value="1"/>
</dbReference>
<dbReference type="SUPFAM" id="SSF51971">
    <property type="entry name" value="Nucleotide-binding domain"/>
    <property type="match status" value="1"/>
</dbReference>
<organism>
    <name type="scientific">Bacillus subtilis (strain 168)</name>
    <dbReference type="NCBI Taxonomy" id="224308"/>
    <lineage>
        <taxon>Bacteria</taxon>
        <taxon>Bacillati</taxon>
        <taxon>Bacillota</taxon>
        <taxon>Bacilli</taxon>
        <taxon>Bacillales</taxon>
        <taxon>Bacillaceae</taxon>
        <taxon>Bacillus</taxon>
    </lineage>
</organism>
<name>GLTB_BACSU</name>
<accession>O34399</accession>
<comment type="catalytic activity">
    <reaction>
        <text>2 L-glutamate + NADP(+) = L-glutamine + 2-oxoglutarate + NADPH + H(+)</text>
        <dbReference type="Rhea" id="RHEA:15501"/>
        <dbReference type="ChEBI" id="CHEBI:15378"/>
        <dbReference type="ChEBI" id="CHEBI:16810"/>
        <dbReference type="ChEBI" id="CHEBI:29985"/>
        <dbReference type="ChEBI" id="CHEBI:57783"/>
        <dbReference type="ChEBI" id="CHEBI:58349"/>
        <dbReference type="ChEBI" id="CHEBI:58359"/>
        <dbReference type="EC" id="1.4.1.13"/>
    </reaction>
</comment>
<comment type="pathway">
    <text>Amino-acid biosynthesis; L-glutamate biosynthesis via GLT pathway; L-glutamate from 2-oxoglutarate and L-glutamine (NADP(+) route): step 1/1.</text>
</comment>
<comment type="pathway">
    <text>Energy metabolism; nitrogen metabolism.</text>
</comment>
<comment type="subunit">
    <text evidence="1">Aggregate of 4 catalytic active heterodimers, consisting of a large and a small subunit.</text>
</comment>
<comment type="induction">
    <text>The gltAB operon is positively regulated by GltC and negatively regulated by TnrA under nitrogen-limited conditions.</text>
</comment>
<comment type="similarity">
    <text evidence="3">Belongs to the glutamate synthase family.</text>
</comment>
<sequence length="493" mass="54862">MGKPTGFMEIKREKPAERDPLTRLKDWKEYSAPFSEEASKRQGARCMDCGTPFCQIGADINGFTSGCPIYNLIPEWNDLVYRGRWKEALERLLKTNNFPEFTGRVCPAPCEGSCTLAISDPAVSIKNIERTIIDKGFENGWIQPRIPKKRTGKKVAIVGSGPAGLASADQLNQAGHSVTVFERADRAGGLLTYGIPNMKLEKGIVERRIKLLTQEGIDFVTNTEIGVDITADELKEQFDAVILCTGAQKQRDLLIEGRDSKGVHYAMDYLTLATKSYLDSNFKDKQFIDAKGKDVIVIGGGDTGADCVATALRQKAKSVHQFGKHPKLPPARTNDNMWPEQPHVFTLEYAYEEAEAKFGRDPREYSIQTTKMVADKNGKLKELHTIQMEKVKNEHGKYEFRELPGTEKVWPAQLVFIAIGFEGTEQPLLKQFGVNSVNNKISAAYGDYQTNIDGVFAAGDARRGQSLIVWAINEGREVAREVDRYLMGSSVLP</sequence>
<feature type="chain" id="PRO_0000170798" description="Glutamate synthase [NADPH] small chain">
    <location>
        <begin position="1"/>
        <end position="493"/>
    </location>
</feature>
<feature type="binding site" evidence="2">
    <location>
        <begin position="299"/>
        <end position="313"/>
    </location>
    <ligand>
        <name>NADP(+)</name>
        <dbReference type="ChEBI" id="CHEBI:58349"/>
    </ligand>
</feature>
<reference key="1">
    <citation type="journal article" date="1997" name="Nature">
        <title>The complete genome sequence of the Gram-positive bacterium Bacillus subtilis.</title>
        <authorList>
            <person name="Kunst F."/>
            <person name="Ogasawara N."/>
            <person name="Moszer I."/>
            <person name="Albertini A.M."/>
            <person name="Alloni G."/>
            <person name="Azevedo V."/>
            <person name="Bertero M.G."/>
            <person name="Bessieres P."/>
            <person name="Bolotin A."/>
            <person name="Borchert S."/>
            <person name="Borriss R."/>
            <person name="Boursier L."/>
            <person name="Brans A."/>
            <person name="Braun M."/>
            <person name="Brignell S.C."/>
            <person name="Bron S."/>
            <person name="Brouillet S."/>
            <person name="Bruschi C.V."/>
            <person name="Caldwell B."/>
            <person name="Capuano V."/>
            <person name="Carter N.M."/>
            <person name="Choi S.-K."/>
            <person name="Codani J.-J."/>
            <person name="Connerton I.F."/>
            <person name="Cummings N.J."/>
            <person name="Daniel R.A."/>
            <person name="Denizot F."/>
            <person name="Devine K.M."/>
            <person name="Duesterhoeft A."/>
            <person name="Ehrlich S.D."/>
            <person name="Emmerson P.T."/>
            <person name="Entian K.-D."/>
            <person name="Errington J."/>
            <person name="Fabret C."/>
            <person name="Ferrari E."/>
            <person name="Foulger D."/>
            <person name="Fritz C."/>
            <person name="Fujita M."/>
            <person name="Fujita Y."/>
            <person name="Fuma S."/>
            <person name="Galizzi A."/>
            <person name="Galleron N."/>
            <person name="Ghim S.-Y."/>
            <person name="Glaser P."/>
            <person name="Goffeau A."/>
            <person name="Golightly E.J."/>
            <person name="Grandi G."/>
            <person name="Guiseppi G."/>
            <person name="Guy B.J."/>
            <person name="Haga K."/>
            <person name="Haiech J."/>
            <person name="Harwood C.R."/>
            <person name="Henaut A."/>
            <person name="Hilbert H."/>
            <person name="Holsappel S."/>
            <person name="Hosono S."/>
            <person name="Hullo M.-F."/>
            <person name="Itaya M."/>
            <person name="Jones L.-M."/>
            <person name="Joris B."/>
            <person name="Karamata D."/>
            <person name="Kasahara Y."/>
            <person name="Klaerr-Blanchard M."/>
            <person name="Klein C."/>
            <person name="Kobayashi Y."/>
            <person name="Koetter P."/>
            <person name="Koningstein G."/>
            <person name="Krogh S."/>
            <person name="Kumano M."/>
            <person name="Kurita K."/>
            <person name="Lapidus A."/>
            <person name="Lardinois S."/>
            <person name="Lauber J."/>
            <person name="Lazarevic V."/>
            <person name="Lee S.-M."/>
            <person name="Levine A."/>
            <person name="Liu H."/>
            <person name="Masuda S."/>
            <person name="Mauel C."/>
            <person name="Medigue C."/>
            <person name="Medina N."/>
            <person name="Mellado R.P."/>
            <person name="Mizuno M."/>
            <person name="Moestl D."/>
            <person name="Nakai S."/>
            <person name="Noback M."/>
            <person name="Noone D."/>
            <person name="O'Reilly M."/>
            <person name="Ogawa K."/>
            <person name="Ogiwara A."/>
            <person name="Oudega B."/>
            <person name="Park S.-H."/>
            <person name="Parro V."/>
            <person name="Pohl T.M."/>
            <person name="Portetelle D."/>
            <person name="Porwollik S."/>
            <person name="Prescott A.M."/>
            <person name="Presecan E."/>
            <person name="Pujic P."/>
            <person name="Purnelle B."/>
            <person name="Rapoport G."/>
            <person name="Rey M."/>
            <person name="Reynolds S."/>
            <person name="Rieger M."/>
            <person name="Rivolta C."/>
            <person name="Rocha E."/>
            <person name="Roche B."/>
            <person name="Rose M."/>
            <person name="Sadaie Y."/>
            <person name="Sato T."/>
            <person name="Scanlan E."/>
            <person name="Schleich S."/>
            <person name="Schroeter R."/>
            <person name="Scoffone F."/>
            <person name="Sekiguchi J."/>
            <person name="Sekowska A."/>
            <person name="Seror S.J."/>
            <person name="Serror P."/>
            <person name="Shin B.-S."/>
            <person name="Soldo B."/>
            <person name="Sorokin A."/>
            <person name="Tacconi E."/>
            <person name="Takagi T."/>
            <person name="Takahashi H."/>
            <person name="Takemaru K."/>
            <person name="Takeuchi M."/>
            <person name="Tamakoshi A."/>
            <person name="Tanaka T."/>
            <person name="Terpstra P."/>
            <person name="Tognoni A."/>
            <person name="Tosato V."/>
            <person name="Uchiyama S."/>
            <person name="Vandenbol M."/>
            <person name="Vannier F."/>
            <person name="Vassarotti A."/>
            <person name="Viari A."/>
            <person name="Wambutt R."/>
            <person name="Wedler E."/>
            <person name="Wedler H."/>
            <person name="Weitzenegger T."/>
            <person name="Winters P."/>
            <person name="Wipat A."/>
            <person name="Yamamoto H."/>
            <person name="Yamane K."/>
            <person name="Yasumoto K."/>
            <person name="Yata K."/>
            <person name="Yoshida K."/>
            <person name="Yoshikawa H.-F."/>
            <person name="Zumstein E."/>
            <person name="Yoshikawa H."/>
            <person name="Danchin A."/>
        </authorList>
    </citation>
    <scope>NUCLEOTIDE SEQUENCE [LARGE SCALE GENOMIC DNA]</scope>
    <source>
        <strain>168</strain>
    </source>
</reference>
<reference key="2">
    <citation type="journal article" date="2009" name="Microbiology">
        <title>From a consortium sequence to a unified sequence: the Bacillus subtilis 168 reference genome a decade later.</title>
        <authorList>
            <person name="Barbe V."/>
            <person name="Cruveiller S."/>
            <person name="Kunst F."/>
            <person name="Lenoble P."/>
            <person name="Meurice G."/>
            <person name="Sekowska A."/>
            <person name="Vallenet D."/>
            <person name="Wang T."/>
            <person name="Moszer I."/>
            <person name="Medigue C."/>
            <person name="Danchin A."/>
        </authorList>
    </citation>
    <scope>SEQUENCE REVISION TO 354</scope>
</reference>
<reference key="3">
    <citation type="journal article" date="2000" name="J. Bacteriol.">
        <title>Role of TnrA in nitrogen source-dependent repression of Bacillus subtilis glutamate synthase gene expression.</title>
        <authorList>
            <person name="Belitsky B.R."/>
            <person name="Wray L.V. Jr."/>
            <person name="Fisher S.H."/>
            <person name="Bohannon D.E."/>
            <person name="Sonenshein A.L."/>
        </authorList>
    </citation>
    <scope>REGULATION BY TNRA</scope>
</reference>
<protein>
    <recommendedName>
        <fullName>Glutamate synthase [NADPH] small chain</fullName>
        <ecNumber>1.4.1.13</ecNumber>
    </recommendedName>
    <alternativeName>
        <fullName>NADPH-GOGAT</fullName>
    </alternativeName>
</protein>